<dbReference type="EMBL" id="AF190909">
    <property type="protein sequence ID" value="AAF20064.1"/>
    <property type="molecule type" value="mRNA"/>
</dbReference>
<dbReference type="EMBL" id="BC061788">
    <property type="protein sequence ID" value="AAH61788.1"/>
    <property type="molecule type" value="mRNA"/>
</dbReference>
<dbReference type="PIR" id="JC7186">
    <property type="entry name" value="JC7186"/>
</dbReference>
<dbReference type="RefSeq" id="NP_113863.2">
    <property type="nucleotide sequence ID" value="NM_031675.2"/>
</dbReference>
<dbReference type="BMRB" id="Q9QXQ0"/>
<dbReference type="SMR" id="Q9QXQ0"/>
<dbReference type="BioGRID" id="248895">
    <property type="interactions" value="8"/>
</dbReference>
<dbReference type="CORUM" id="Q9QXQ0"/>
<dbReference type="FunCoup" id="Q9QXQ0">
    <property type="interactions" value="2085"/>
</dbReference>
<dbReference type="IntAct" id="Q9QXQ0">
    <property type="interactions" value="4"/>
</dbReference>
<dbReference type="MINT" id="Q9QXQ0"/>
<dbReference type="STRING" id="10116.ENSRNOP00000027773"/>
<dbReference type="GlyGen" id="Q9QXQ0">
    <property type="glycosylation" value="1 site, 1 O-linked glycan (1 site)"/>
</dbReference>
<dbReference type="iPTMnet" id="Q9QXQ0"/>
<dbReference type="PhosphoSitePlus" id="Q9QXQ0"/>
<dbReference type="jPOST" id="Q9QXQ0"/>
<dbReference type="PaxDb" id="10116-ENSRNOP00000027773"/>
<dbReference type="GeneID" id="63836"/>
<dbReference type="KEGG" id="rno:63836"/>
<dbReference type="UCSC" id="RGD:61816">
    <property type="organism name" value="rat"/>
</dbReference>
<dbReference type="AGR" id="RGD:61816"/>
<dbReference type="CTD" id="81"/>
<dbReference type="RGD" id="61816">
    <property type="gene designation" value="Actn4"/>
</dbReference>
<dbReference type="VEuPathDB" id="HostDB:ENSRNOG00000020433"/>
<dbReference type="eggNOG" id="KOG0035">
    <property type="taxonomic scope" value="Eukaryota"/>
</dbReference>
<dbReference type="InParanoid" id="Q9QXQ0"/>
<dbReference type="PhylomeDB" id="Q9QXQ0"/>
<dbReference type="TreeFam" id="TF352676"/>
<dbReference type="Reactome" id="R-RNO-114608">
    <property type="pathway name" value="Platelet degranulation"/>
</dbReference>
<dbReference type="PRO" id="PR:Q9QXQ0"/>
<dbReference type="Proteomes" id="UP000002494">
    <property type="component" value="Chromosome 1"/>
</dbReference>
<dbReference type="Bgee" id="ENSRNOG00000020433">
    <property type="expression patterns" value="Expressed in jejunum and 19 other cell types or tissues"/>
</dbReference>
<dbReference type="ExpressionAtlas" id="Q9QXQ0">
    <property type="expression patterns" value="baseline and differential"/>
</dbReference>
<dbReference type="GO" id="GO:0015629">
    <property type="term" value="C:actin cytoskeleton"/>
    <property type="evidence" value="ECO:0000266"/>
    <property type="project" value="RGD"/>
</dbReference>
<dbReference type="GO" id="GO:0030054">
    <property type="term" value="C:cell junction"/>
    <property type="evidence" value="ECO:0000318"/>
    <property type="project" value="GO_Central"/>
</dbReference>
<dbReference type="GO" id="GO:0042995">
    <property type="term" value="C:cell projection"/>
    <property type="evidence" value="ECO:0000318"/>
    <property type="project" value="GO_Central"/>
</dbReference>
<dbReference type="GO" id="GO:0005911">
    <property type="term" value="C:cell-cell junction"/>
    <property type="evidence" value="ECO:0000266"/>
    <property type="project" value="RGD"/>
</dbReference>
<dbReference type="GO" id="GO:0030864">
    <property type="term" value="C:cortical actin cytoskeleton"/>
    <property type="evidence" value="ECO:0000266"/>
    <property type="project" value="RGD"/>
</dbReference>
<dbReference type="GO" id="GO:0030863">
    <property type="term" value="C:cortical cytoskeleton"/>
    <property type="evidence" value="ECO:0000266"/>
    <property type="project" value="RGD"/>
</dbReference>
<dbReference type="GO" id="GO:0005737">
    <property type="term" value="C:cytoplasm"/>
    <property type="evidence" value="ECO:0000266"/>
    <property type="project" value="RGD"/>
</dbReference>
<dbReference type="GO" id="GO:0005829">
    <property type="term" value="C:cytosol"/>
    <property type="evidence" value="ECO:0000304"/>
    <property type="project" value="Reactome"/>
</dbReference>
<dbReference type="GO" id="GO:0005925">
    <property type="term" value="C:focal adhesion"/>
    <property type="evidence" value="ECO:0000266"/>
    <property type="project" value="RGD"/>
</dbReference>
<dbReference type="GO" id="GO:0098978">
    <property type="term" value="C:glutamatergic synapse"/>
    <property type="evidence" value="ECO:0000314"/>
    <property type="project" value="SynGO"/>
</dbReference>
<dbReference type="GO" id="GO:0043005">
    <property type="term" value="C:neuron projection"/>
    <property type="evidence" value="ECO:0000314"/>
    <property type="project" value="UniProtKB"/>
</dbReference>
<dbReference type="GO" id="GO:0005634">
    <property type="term" value="C:nucleus"/>
    <property type="evidence" value="ECO:0000266"/>
    <property type="project" value="RGD"/>
</dbReference>
<dbReference type="GO" id="GO:0048471">
    <property type="term" value="C:perinuclear region of cytoplasm"/>
    <property type="evidence" value="ECO:0000250"/>
    <property type="project" value="UniProtKB"/>
</dbReference>
<dbReference type="GO" id="GO:0005886">
    <property type="term" value="C:plasma membrane"/>
    <property type="evidence" value="ECO:0000318"/>
    <property type="project" value="GO_Central"/>
</dbReference>
<dbReference type="GO" id="GO:0098871">
    <property type="term" value="C:postsynaptic actin cytoskeleton"/>
    <property type="evidence" value="ECO:0000314"/>
    <property type="project" value="SynGO"/>
</dbReference>
<dbReference type="GO" id="GO:0032991">
    <property type="term" value="C:protein-containing complex"/>
    <property type="evidence" value="ECO:0000314"/>
    <property type="project" value="RGD"/>
</dbReference>
<dbReference type="GO" id="GO:0031143">
    <property type="term" value="C:pseudopodium"/>
    <property type="evidence" value="ECO:0000266"/>
    <property type="project" value="RGD"/>
</dbReference>
<dbReference type="GO" id="GO:1990904">
    <property type="term" value="C:ribonucleoprotein complex"/>
    <property type="evidence" value="ECO:0000250"/>
    <property type="project" value="UniProtKB"/>
</dbReference>
<dbReference type="GO" id="GO:0001725">
    <property type="term" value="C:stress fiber"/>
    <property type="evidence" value="ECO:0000314"/>
    <property type="project" value="RGD"/>
</dbReference>
<dbReference type="GO" id="GO:0030018">
    <property type="term" value="C:Z disc"/>
    <property type="evidence" value="ECO:0000266"/>
    <property type="project" value="RGD"/>
</dbReference>
<dbReference type="GO" id="GO:0051015">
    <property type="term" value="F:actin filament binding"/>
    <property type="evidence" value="ECO:0000266"/>
    <property type="project" value="RGD"/>
</dbReference>
<dbReference type="GO" id="GO:0005509">
    <property type="term" value="F:calcium ion binding"/>
    <property type="evidence" value="ECO:0007669"/>
    <property type="project" value="InterPro"/>
</dbReference>
<dbReference type="GO" id="GO:0031490">
    <property type="term" value="F:chromatin DNA binding"/>
    <property type="evidence" value="ECO:0000266"/>
    <property type="project" value="RGD"/>
</dbReference>
<dbReference type="GO" id="GO:0016922">
    <property type="term" value="F:nuclear receptor binding"/>
    <property type="evidence" value="ECO:0000266"/>
    <property type="project" value="RGD"/>
</dbReference>
<dbReference type="GO" id="GO:0042974">
    <property type="term" value="F:nuclear retinoic acid receptor binding"/>
    <property type="evidence" value="ECO:0000266"/>
    <property type="project" value="RGD"/>
</dbReference>
<dbReference type="GO" id="GO:0001882">
    <property type="term" value="F:nucleoside binding"/>
    <property type="evidence" value="ECO:0000266"/>
    <property type="project" value="RGD"/>
</dbReference>
<dbReference type="GO" id="GO:0042803">
    <property type="term" value="F:protein homodimerization activity"/>
    <property type="evidence" value="ECO:0000266"/>
    <property type="project" value="RGD"/>
</dbReference>
<dbReference type="GO" id="GO:0044877">
    <property type="term" value="F:protein-containing complex binding"/>
    <property type="evidence" value="ECO:0000353"/>
    <property type="project" value="RGD"/>
</dbReference>
<dbReference type="GO" id="GO:0000977">
    <property type="term" value="F:RNA polymerase II transcription regulatory region sequence-specific DNA binding"/>
    <property type="evidence" value="ECO:0000266"/>
    <property type="project" value="RGD"/>
</dbReference>
<dbReference type="GO" id="GO:0005200">
    <property type="term" value="F:structural constituent of cytoskeleton"/>
    <property type="evidence" value="ECO:0000266"/>
    <property type="project" value="RGD"/>
</dbReference>
<dbReference type="GO" id="GO:0098973">
    <property type="term" value="F:structural constituent of postsynaptic actin cytoskeleton"/>
    <property type="evidence" value="ECO:0000314"/>
    <property type="project" value="SynGO"/>
</dbReference>
<dbReference type="GO" id="GO:0003713">
    <property type="term" value="F:transcription coactivator activity"/>
    <property type="evidence" value="ECO:0000250"/>
    <property type="project" value="UniProtKB"/>
</dbReference>
<dbReference type="GO" id="GO:0044325">
    <property type="term" value="F:transmembrane transporter binding"/>
    <property type="evidence" value="ECO:0000266"/>
    <property type="project" value="RGD"/>
</dbReference>
<dbReference type="GO" id="GO:0031625">
    <property type="term" value="F:ubiquitin protein ligase binding"/>
    <property type="evidence" value="ECO:0000353"/>
    <property type="project" value="RGD"/>
</dbReference>
<dbReference type="GO" id="GO:0030036">
    <property type="term" value="P:actin cytoskeleton organization"/>
    <property type="evidence" value="ECO:0000318"/>
    <property type="project" value="GO_Central"/>
</dbReference>
<dbReference type="GO" id="GO:0051017">
    <property type="term" value="P:actin filament bundle assembly"/>
    <property type="evidence" value="ECO:0000266"/>
    <property type="project" value="RGD"/>
</dbReference>
<dbReference type="GO" id="GO:0070830">
    <property type="term" value="P:bicellular tight junction assembly"/>
    <property type="evidence" value="ECO:0000266"/>
    <property type="project" value="RGD"/>
</dbReference>
<dbReference type="GO" id="GO:0010467">
    <property type="term" value="P:gene expression"/>
    <property type="evidence" value="ECO:0000266"/>
    <property type="project" value="RGD"/>
</dbReference>
<dbReference type="GO" id="GO:0032835">
    <property type="term" value="P:glomerulus development"/>
    <property type="evidence" value="ECO:0000266"/>
    <property type="project" value="RGD"/>
</dbReference>
<dbReference type="GO" id="GO:0055001">
    <property type="term" value="P:muscle cell development"/>
    <property type="evidence" value="ECO:0000318"/>
    <property type="project" value="GO_Central"/>
</dbReference>
<dbReference type="GO" id="GO:1900025">
    <property type="term" value="P:negative regulation of substrate adhesion-dependent cell spreading"/>
    <property type="evidence" value="ECO:0000266"/>
    <property type="project" value="RGD"/>
</dbReference>
<dbReference type="GO" id="GO:0035357">
    <property type="term" value="P:peroxisome proliferator activated receptor signaling pathway"/>
    <property type="evidence" value="ECO:0000250"/>
    <property type="project" value="UniProtKB"/>
</dbReference>
<dbReference type="GO" id="GO:0090521">
    <property type="term" value="P:podocyte cell migration"/>
    <property type="evidence" value="ECO:0000266"/>
    <property type="project" value="RGD"/>
</dbReference>
<dbReference type="GO" id="GO:0030335">
    <property type="term" value="P:positive regulation of cell migration"/>
    <property type="evidence" value="ECO:0000266"/>
    <property type="project" value="RGD"/>
</dbReference>
<dbReference type="GO" id="GO:1901224">
    <property type="term" value="P:positive regulation of non-canonical NF-kappaB signal transduction"/>
    <property type="evidence" value="ECO:0000266"/>
    <property type="project" value="RGD"/>
</dbReference>
<dbReference type="GO" id="GO:0048549">
    <property type="term" value="P:positive regulation of pinocytosis"/>
    <property type="evidence" value="ECO:0000266"/>
    <property type="project" value="RGD"/>
</dbReference>
<dbReference type="GO" id="GO:0045944">
    <property type="term" value="P:positive regulation of transcription by RNA polymerase II"/>
    <property type="evidence" value="ECO:0000266"/>
    <property type="project" value="RGD"/>
</dbReference>
<dbReference type="GO" id="GO:1902396">
    <property type="term" value="P:protein localization to bicellular tight junction"/>
    <property type="evidence" value="ECO:0000266"/>
    <property type="project" value="RGD"/>
</dbReference>
<dbReference type="GO" id="GO:0015031">
    <property type="term" value="P:protein transport"/>
    <property type="evidence" value="ECO:0007669"/>
    <property type="project" value="UniProtKB-KW"/>
</dbReference>
<dbReference type="GO" id="GO:0042981">
    <property type="term" value="P:regulation of apoptotic process"/>
    <property type="evidence" value="ECO:0000315"/>
    <property type="project" value="RGD"/>
</dbReference>
<dbReference type="GO" id="GO:0001666">
    <property type="term" value="P:response to hypoxia"/>
    <property type="evidence" value="ECO:0000270"/>
    <property type="project" value="RGD"/>
</dbReference>
<dbReference type="GO" id="GO:0048384">
    <property type="term" value="P:retinoic acid receptor signaling pathway"/>
    <property type="evidence" value="ECO:0000250"/>
    <property type="project" value="UniProtKB"/>
</dbReference>
<dbReference type="GO" id="GO:0033209">
    <property type="term" value="P:tumor necrosis factor-mediated signaling pathway"/>
    <property type="evidence" value="ECO:0000266"/>
    <property type="project" value="RGD"/>
</dbReference>
<dbReference type="GO" id="GO:0030050">
    <property type="term" value="P:vesicle transport along actin filament"/>
    <property type="evidence" value="ECO:0000266"/>
    <property type="project" value="RGD"/>
</dbReference>
<dbReference type="CDD" id="cd21214">
    <property type="entry name" value="CH_ACTN_rpt1"/>
    <property type="match status" value="1"/>
</dbReference>
<dbReference type="CDD" id="cd21216">
    <property type="entry name" value="CH_ACTN_rpt2"/>
    <property type="match status" value="1"/>
</dbReference>
<dbReference type="CDD" id="cd00051">
    <property type="entry name" value="EFh"/>
    <property type="match status" value="1"/>
</dbReference>
<dbReference type="CDD" id="cd00176">
    <property type="entry name" value="SPEC"/>
    <property type="match status" value="3"/>
</dbReference>
<dbReference type="FunFam" id="1.10.238.10:FF:000004">
    <property type="entry name" value="Actinin alpha 1"/>
    <property type="match status" value="1"/>
</dbReference>
<dbReference type="FunFam" id="1.10.418.10:FF:000001">
    <property type="entry name" value="Actinin alpha 1"/>
    <property type="match status" value="1"/>
</dbReference>
<dbReference type="FunFam" id="1.20.58.60:FF:000004">
    <property type="entry name" value="Actinin alpha 1"/>
    <property type="match status" value="1"/>
</dbReference>
<dbReference type="FunFam" id="1.20.58.60:FF:000005">
    <property type="entry name" value="Actinin alpha 1"/>
    <property type="match status" value="1"/>
</dbReference>
<dbReference type="FunFam" id="1.10.238.10:FF:000156">
    <property type="entry name" value="Actinin alpha 4"/>
    <property type="match status" value="1"/>
</dbReference>
<dbReference type="FunFam" id="1.10.418.10:FF:000005">
    <property type="entry name" value="Actinin alpha 4"/>
    <property type="match status" value="1"/>
</dbReference>
<dbReference type="FunFam" id="1.20.58.60:FF:000002">
    <property type="entry name" value="Actinin, alpha 1"/>
    <property type="match status" value="1"/>
</dbReference>
<dbReference type="FunFam" id="1.20.58.60:FF:000003">
    <property type="entry name" value="Actinin, alpha 1"/>
    <property type="match status" value="1"/>
</dbReference>
<dbReference type="Gene3D" id="1.20.58.60">
    <property type="match status" value="4"/>
</dbReference>
<dbReference type="Gene3D" id="1.10.418.10">
    <property type="entry name" value="Calponin-like domain"/>
    <property type="match status" value="2"/>
</dbReference>
<dbReference type="Gene3D" id="1.10.238.10">
    <property type="entry name" value="EF-hand"/>
    <property type="match status" value="2"/>
</dbReference>
<dbReference type="InterPro" id="IPR001589">
    <property type="entry name" value="Actinin_actin-bd_CS"/>
</dbReference>
<dbReference type="InterPro" id="IPR001715">
    <property type="entry name" value="CH_dom"/>
</dbReference>
<dbReference type="InterPro" id="IPR036872">
    <property type="entry name" value="CH_dom_sf"/>
</dbReference>
<dbReference type="InterPro" id="IPR011992">
    <property type="entry name" value="EF-hand-dom_pair"/>
</dbReference>
<dbReference type="InterPro" id="IPR014837">
    <property type="entry name" value="EF-hand_Ca_insen"/>
</dbReference>
<dbReference type="InterPro" id="IPR018247">
    <property type="entry name" value="EF_Hand_1_Ca_BS"/>
</dbReference>
<dbReference type="InterPro" id="IPR002048">
    <property type="entry name" value="EF_hand_dom"/>
</dbReference>
<dbReference type="InterPro" id="IPR018159">
    <property type="entry name" value="Spectrin/alpha-actinin"/>
</dbReference>
<dbReference type="InterPro" id="IPR002017">
    <property type="entry name" value="Spectrin_repeat"/>
</dbReference>
<dbReference type="PANTHER" id="PTHR11915">
    <property type="entry name" value="SPECTRIN/FILAMIN RELATED CYTOSKELETAL PROTEIN"/>
    <property type="match status" value="1"/>
</dbReference>
<dbReference type="Pfam" id="PF00307">
    <property type="entry name" value="CH"/>
    <property type="match status" value="2"/>
</dbReference>
<dbReference type="Pfam" id="PF08726">
    <property type="entry name" value="EFhand_Ca_insen"/>
    <property type="match status" value="1"/>
</dbReference>
<dbReference type="Pfam" id="PF00435">
    <property type="entry name" value="Spectrin"/>
    <property type="match status" value="4"/>
</dbReference>
<dbReference type="SMART" id="SM00033">
    <property type="entry name" value="CH"/>
    <property type="match status" value="2"/>
</dbReference>
<dbReference type="SMART" id="SM00054">
    <property type="entry name" value="EFh"/>
    <property type="match status" value="2"/>
</dbReference>
<dbReference type="SMART" id="SM01184">
    <property type="entry name" value="efhand_Ca_insen"/>
    <property type="match status" value="1"/>
</dbReference>
<dbReference type="SMART" id="SM00150">
    <property type="entry name" value="SPEC"/>
    <property type="match status" value="4"/>
</dbReference>
<dbReference type="SUPFAM" id="SSF47576">
    <property type="entry name" value="Calponin-homology domain, CH-domain"/>
    <property type="match status" value="1"/>
</dbReference>
<dbReference type="SUPFAM" id="SSF47473">
    <property type="entry name" value="EF-hand"/>
    <property type="match status" value="1"/>
</dbReference>
<dbReference type="SUPFAM" id="SSF46966">
    <property type="entry name" value="Spectrin repeat"/>
    <property type="match status" value="4"/>
</dbReference>
<dbReference type="PROSITE" id="PS00019">
    <property type="entry name" value="ACTININ_1"/>
    <property type="match status" value="1"/>
</dbReference>
<dbReference type="PROSITE" id="PS00020">
    <property type="entry name" value="ACTININ_2"/>
    <property type="match status" value="1"/>
</dbReference>
<dbReference type="PROSITE" id="PS50021">
    <property type="entry name" value="CH"/>
    <property type="match status" value="2"/>
</dbReference>
<dbReference type="PROSITE" id="PS00018">
    <property type="entry name" value="EF_HAND_1"/>
    <property type="match status" value="1"/>
</dbReference>
<dbReference type="PROSITE" id="PS50222">
    <property type="entry name" value="EF_HAND_2"/>
    <property type="match status" value="2"/>
</dbReference>
<keyword id="KW-0007">Acetylation</keyword>
<keyword id="KW-0009">Actin-binding</keyword>
<keyword id="KW-0106">Calcium</keyword>
<keyword id="KW-0965">Cell junction</keyword>
<keyword id="KW-0963">Cytoplasm</keyword>
<keyword id="KW-0206">Cytoskeleton</keyword>
<keyword id="KW-0479">Metal-binding</keyword>
<keyword id="KW-0539">Nucleus</keyword>
<keyword id="KW-0597">Phosphoprotein</keyword>
<keyword id="KW-0653">Protein transport</keyword>
<keyword id="KW-1185">Reference proteome</keyword>
<keyword id="KW-0677">Repeat</keyword>
<keyword id="KW-0813">Transport</keyword>
<gene>
    <name evidence="12" type="primary">Actn4</name>
</gene>
<organism>
    <name type="scientific">Rattus norvegicus</name>
    <name type="common">Rat</name>
    <dbReference type="NCBI Taxonomy" id="10116"/>
    <lineage>
        <taxon>Eukaryota</taxon>
        <taxon>Metazoa</taxon>
        <taxon>Chordata</taxon>
        <taxon>Craniata</taxon>
        <taxon>Vertebrata</taxon>
        <taxon>Euteleostomi</taxon>
        <taxon>Mammalia</taxon>
        <taxon>Eutheria</taxon>
        <taxon>Euarchontoglires</taxon>
        <taxon>Glires</taxon>
        <taxon>Rodentia</taxon>
        <taxon>Myomorpha</taxon>
        <taxon>Muroidea</taxon>
        <taxon>Muridae</taxon>
        <taxon>Murinae</taxon>
        <taxon>Rattus</taxon>
    </lineage>
</organism>
<accession>Q9QXQ0</accession>
<accession>Q6P786</accession>
<proteinExistence type="evidence at protein level"/>
<sequence>MVDYHAANQAYQYGPSSGGNGTGGGGGMGDYMAQEDDWDRDLLLDPAWEKQQRKTFTAWCNSHLRKAGTQIENIDEDFRDGLKLMLLLEVISGERLPKPERGKMRVHKINNVNKALDFIASKGVKLVSIGAEEIVDGNAKMTLGMIWTIILRFAIQDISVEETSAKEGLLLWCQRKTAPYKNVNVQNFHISWKDGLAFNALIHRHRPELIEYDKLRKDDPVTNLNNAFEVAEKYLDIPKMLDAEDIVNTARPDEKAIMTYVSSFYHAFSGAQKAETAANRICKVLAVNQENEHLMEDYERLASDLLEWIRRTIPWLEDRVPQKTIQEMQQKLEDFRDYRRVHKPPKVQEKCQLEINFNTLQTKLRLSNRPAFMPSEGRMVSDINNGWQHLEQAEKGYEEWLLNEIRRLERLDHLAEKFRQKASIHEAWTDGKEAMLKHRDYETATLSDIKALIRKHEAFESDLAAHQDRVEQIAAIAQELNELDYYDSHNVNTRCQKICDQWDNLGSLTHSRREALEKTEKQLETIDQLHLEYAKRAAPFNNWMESAMEDLQDMFIVHTIEEIEGLISAHDQFKSTLPDADREREAILAIHKEAQRIAESNHIKLSGSNPYTSVTPQIINSKWEKVQQLVPKRDHALLEEQSKQQSNEHLRRQFASQANMVGPWIQTKMEEIGRISIEMNGTLEDQLSHLKQYERSIVDYKPNLDLLEQQHQLIQEALIFDNKHTNYTMEHLRVGWEQLLTTIARTINEVENQILTRDAKGISQEQMQEFRASFNHFDKDHGGALGPEEFKACLISLGYDVENDRQGDAEFNRIMSVVDPNHSGLVTFQAFIDFMSRETTDTDTADQVIASFKVLAGDKNFITAEELRRELPPDQAEYCIARMAPYQGPDAAPGALDYKSFSTALYGESDL</sequence>
<evidence type="ECO:0000250" key="1">
    <source>
        <dbReference type="UniProtKB" id="O43707"/>
    </source>
</evidence>
<evidence type="ECO:0000250" key="2">
    <source>
        <dbReference type="UniProtKB" id="P12814"/>
    </source>
</evidence>
<evidence type="ECO:0000250" key="3">
    <source>
        <dbReference type="UniProtKB" id="P57780"/>
    </source>
</evidence>
<evidence type="ECO:0000250" key="4">
    <source>
        <dbReference type="UniProtKB" id="Q9Z1P2"/>
    </source>
</evidence>
<evidence type="ECO:0000255" key="5"/>
<evidence type="ECO:0000255" key="6">
    <source>
        <dbReference type="PROSITE-ProRule" id="PRU00044"/>
    </source>
</evidence>
<evidence type="ECO:0000255" key="7">
    <source>
        <dbReference type="PROSITE-ProRule" id="PRU00448"/>
    </source>
</evidence>
<evidence type="ECO:0000256" key="8">
    <source>
        <dbReference type="SAM" id="MobiDB-lite"/>
    </source>
</evidence>
<evidence type="ECO:0000269" key="9">
    <source>
    </source>
</evidence>
<evidence type="ECO:0000269" key="10">
    <source>
    </source>
</evidence>
<evidence type="ECO:0000305" key="11"/>
<evidence type="ECO:0000312" key="12">
    <source>
        <dbReference type="RGD" id="61816"/>
    </source>
</evidence>
<reference key="1">
    <citation type="journal article" date="2000" name="Biochem. Biophys. Res. Commun.">
        <title>BERP, a novel ring finger protein, binds to alpha-actinin-4.</title>
        <authorList>
            <person name="El-Husseini A.E.-D."/>
            <person name="Kwasnicka D."/>
            <person name="Yamada T."/>
            <person name="Hirohashi S."/>
            <person name="Vincent S.R."/>
        </authorList>
    </citation>
    <scope>NUCLEOTIDE SEQUENCE [MRNA]</scope>
    <source>
        <tissue>Brain</tissue>
    </source>
</reference>
<reference key="2">
    <citation type="journal article" date="2004" name="Genome Res.">
        <title>The status, quality, and expansion of the NIH full-length cDNA project: the Mammalian Gene Collection (MGC).</title>
        <authorList>
            <consortium name="The MGC Project Team"/>
        </authorList>
    </citation>
    <scope>NUCLEOTIDE SEQUENCE [LARGE SCALE MRNA]</scope>
    <source>
        <tissue>Prostate</tissue>
    </source>
</reference>
<reference key="3">
    <citation type="journal article" date="2004" name="Invest. Ophthalmol. Vis. Sci.">
        <title>Pdlim2, a novel PDZ-LIM domain protein, interacts with alpha-actinins and filamin A.</title>
        <authorList>
            <person name="Torrado M."/>
            <person name="Senatorov V.V."/>
            <person name="Trivedi R."/>
            <person name="Fariss R.N."/>
            <person name="Tomarev S.I."/>
        </authorList>
    </citation>
    <scope>INTERACTION WITH PDLIM2</scope>
</reference>
<reference key="4">
    <citation type="journal article" date="2005" name="Proc. Natl. Acad. Sci. U.S.A.">
        <title>Cell junction-associated proteins IQGAP1, MAGI-2, CASK, spectrins, and alpha-actinin are components of the nephrin multiprotein complex.</title>
        <authorList>
            <person name="Lehtonen S."/>
            <person name="Ryan J.J."/>
            <person name="Kudlicka K."/>
            <person name="Iino N."/>
            <person name="Zhou H."/>
            <person name="Farquhar M.G."/>
        </authorList>
    </citation>
    <scope>IDENTIFICATION IN A COMPLEX WITH CASK; IQGAP1; MAGI2; NPHS1; SPTAN1 AND SPTBN1</scope>
    <scope>IDENTIFICATION BY MASS SPECTROMETRY</scope>
    <scope>TISSUE SPECIFICITY</scope>
    <source>
        <strain>Sprague-Dawley</strain>
        <tissue>Renal glomerulus</tissue>
    </source>
</reference>
<protein>
    <recommendedName>
        <fullName evidence="11">Alpha-actinin-4</fullName>
    </recommendedName>
    <alternativeName>
        <fullName evidence="11">Non-muscle alpha-actinin 4</fullName>
    </alternativeName>
</protein>
<name>ACTN4_RAT</name>
<comment type="function">
    <text evidence="1">F-actin cross-linking protein which is thought to anchor actin to a variety of intracellular structures. This is a bundling protein. Probably involved in vesicular trafficking via its association with the CART complex. The CART complex is necessary for efficient transferrin receptor recycling but not for EGFR degradation. Involved in tight junction assembly in epithelial cells probably through interaction with MICALL2. Links MICALL2 to the actin cytoskeleton and recruits it to the tight junctions. May also function as a transcriptional coactivator, stimulating transcription mediated by the nuclear hormone receptors PPARG and RARA. Association with IGSF8 regulates the immune synapse formation and is required for efficient T-cell activation.</text>
</comment>
<comment type="subunit">
    <text evidence="1 3 9 10">Homodimer; antiparallel. Interacts with MAGI1 (By similarity). Interacts with MICALL2 (preferentially in opened conformation); stimulated by RAB13 activation (By similarity). Identified in a IGF2BP1-dependent mRNP granule complex containing untranslated mRNAs (By similarity). Component of the CART complex, at least composed of ACTN4, HGS/HRS, MYO5B and TRIM3 (By similarity). Binds TRIM3 at the N-terminus (By similarity). Interacts with PDLIM2 (PubMed:15505042). Identified in a complex with CASK, IQGAP1, MAGI2, NPHS1, SPTAN1 and SPTBN1 (PubMed:15994232). Interacts with PPARG and RARA (By similarity). Binds to VCL; this interaction triggers VCL conformational changes (By similarity). Interacts with SEPTIN14 (By similarity). Interacts with IGSF8 (By similarity).</text>
</comment>
<comment type="interaction">
    <interactant intactId="EBI-919056">
        <id>Q9QXQ0</id>
    </interactant>
    <interactant intactId="EBI-915426">
        <id>P19357</id>
        <label>Slc2a4</label>
    </interactant>
    <organismsDiffer>false</organismsDiffer>
    <experiments>3</experiments>
</comment>
<comment type="subcellular location">
    <subcellularLocation>
        <location evidence="1">Nucleus</location>
    </subcellularLocation>
    <subcellularLocation>
        <location evidence="1">Cytoplasm</location>
    </subcellularLocation>
    <subcellularLocation>
        <location evidence="3">Cell junction</location>
    </subcellularLocation>
    <subcellularLocation>
        <location evidence="1">Cytoplasm</location>
        <location evidence="1">Cytoskeleton</location>
        <location evidence="1">Stress fiber</location>
    </subcellularLocation>
    <subcellularLocation>
        <location evidence="3">Cytoplasm</location>
        <location evidence="3">Perinuclear region</location>
    </subcellularLocation>
    <text evidence="1 3">Localized in cytoplasmic mRNP granules containing untranslated mRNAs. Expressed in the perinuclear rim and manchette structure in early elongating spermatids during spermiogenesis (By similarity).</text>
</comment>
<comment type="tissue specificity">
    <text evidence="10">Expressed in the foot process layer of podocytes in the kidney glomerulus but not in tubules (at protein level).</text>
</comment>
<comment type="domain">
    <text evidence="1">Contains one Leu-Xaa-Xaa-Leu-Leu (LXXLL) motif that mediates interaction with nuclear receptors.</text>
</comment>
<comment type="similarity">
    <text evidence="11">Belongs to the alpha-actinin family.</text>
</comment>
<feature type="chain" id="PRO_0000073443" description="Alpha-actinin-4">
    <location>
        <begin position="1"/>
        <end position="911"/>
    </location>
</feature>
<feature type="domain" description="Calponin-homology (CH) 1" evidence="6">
    <location>
        <begin position="50"/>
        <end position="154"/>
    </location>
</feature>
<feature type="domain" description="Calponin-homology (CH) 2" evidence="6">
    <location>
        <begin position="163"/>
        <end position="269"/>
    </location>
</feature>
<feature type="repeat" description="Spectrin 1" evidence="5">
    <location>
        <begin position="293"/>
        <end position="403"/>
    </location>
</feature>
<feature type="repeat" description="Spectrin 2" evidence="5">
    <location>
        <begin position="413"/>
        <end position="518"/>
    </location>
</feature>
<feature type="repeat" description="Spectrin 3" evidence="5">
    <location>
        <begin position="528"/>
        <end position="639"/>
    </location>
</feature>
<feature type="repeat" description="Spectrin 4" evidence="5">
    <location>
        <begin position="649"/>
        <end position="752"/>
    </location>
</feature>
<feature type="domain" description="EF-hand 1" evidence="7">
    <location>
        <begin position="765"/>
        <end position="800"/>
    </location>
</feature>
<feature type="domain" description="EF-hand 2" evidence="7">
    <location>
        <begin position="806"/>
        <end position="841"/>
    </location>
</feature>
<feature type="region of interest" description="Actin-binding">
    <location>
        <begin position="1"/>
        <end position="269"/>
    </location>
</feature>
<feature type="region of interest" description="Disordered" evidence="8">
    <location>
        <begin position="12"/>
        <end position="31"/>
    </location>
</feature>
<feature type="region of interest" description="Interaction with VCL" evidence="1">
    <location>
        <begin position="12"/>
        <end position="26"/>
    </location>
</feature>
<feature type="region of interest" description="Interaction with VCL" evidence="1">
    <location>
        <begin position="40"/>
        <end position="61"/>
    </location>
</feature>
<feature type="region of interest" description="Interaction with VCL" evidence="1">
    <location>
        <begin position="108"/>
        <end position="126"/>
    </location>
</feature>
<feature type="region of interest" description="Polyphosphoinositide (PIP2)-binding" evidence="5">
    <location>
        <begin position="177"/>
        <end position="192"/>
    </location>
</feature>
<feature type="region of interest" description="Mediates interaction with MICALL2" evidence="3">
    <location>
        <begin position="736"/>
        <end position="911"/>
    </location>
</feature>
<feature type="short sequence motif" description="LXXLL motif" evidence="1">
    <location>
        <begin position="84"/>
        <end position="88"/>
    </location>
</feature>
<feature type="compositionally biased region" description="Gly residues" evidence="8">
    <location>
        <begin position="16"/>
        <end position="29"/>
    </location>
</feature>
<feature type="binding site" evidence="7">
    <location>
        <position position="778"/>
    </location>
    <ligand>
        <name>Ca(2+)</name>
        <dbReference type="ChEBI" id="CHEBI:29108"/>
    </ligand>
</feature>
<feature type="binding site" evidence="7">
    <location>
        <position position="780"/>
    </location>
    <ligand>
        <name>Ca(2+)</name>
        <dbReference type="ChEBI" id="CHEBI:29108"/>
    </ligand>
</feature>
<feature type="binding site" evidence="7">
    <location>
        <position position="789"/>
    </location>
    <ligand>
        <name>Ca(2+)</name>
        <dbReference type="ChEBI" id="CHEBI:29108"/>
    </ligand>
</feature>
<feature type="modified residue" description="Phosphotyrosine" evidence="2">
    <location>
        <position position="31"/>
    </location>
</feature>
<feature type="modified residue" description="N6-acetyllysine" evidence="1">
    <location>
        <position position="114"/>
    </location>
</feature>
<feature type="modified residue" description="N6-acetyllysine" evidence="2">
    <location>
        <position position="214"/>
    </location>
</feature>
<feature type="modified residue" description="Phosphothreonine" evidence="1">
    <location>
        <position position="249"/>
    </location>
</feature>
<feature type="modified residue" description="N6-acetyllysine" evidence="1">
    <location>
        <position position="592"/>
    </location>
</feature>
<feature type="modified residue" description="N6-acetyllysine" evidence="1">
    <location>
        <position position="625"/>
    </location>
</feature>
<feature type="modified residue" description="Phosphoserine" evidence="2">
    <location>
        <position position="696"/>
    </location>
</feature>
<feature type="modified residue" description="N6-acetyllysine" evidence="3">
    <location>
        <position position="779"/>
    </location>
</feature>
<feature type="modified residue" description="N6-acetyllysine" evidence="3">
    <location>
        <position position="859"/>
    </location>
</feature>
<feature type="modified residue" description="Phosphoserine" evidence="4">
    <location>
        <position position="909"/>
    </location>
</feature>
<feature type="sequence conflict" description="In Ref. 1; AAF20064." evidence="11" ref="1">
    <original>A</original>
    <variation>G</variation>
    <location>
        <position position="250"/>
    </location>
</feature>
<feature type="sequence conflict" description="In Ref. 1; AAF20064." evidence="11" ref="1">
    <original>R</original>
    <variation>P</variation>
    <location>
        <position position="406"/>
    </location>
</feature>
<feature type="sequence conflict" description="In Ref. 1; AAF20064." evidence="11" ref="1">
    <original>A</original>
    <variation>G</variation>
    <location>
        <position position="792"/>
    </location>
</feature>
<feature type="sequence conflict" description="In Ref. 1; AAF20064." evidence="11" ref="1">
    <original>R</original>
    <variation>K</variation>
    <location>
        <position position="837"/>
    </location>
</feature>
<feature type="sequence conflict" description="In Ref. 1; AAF20064." evidence="11" ref="1">
    <original>A</original>
    <variation>G</variation>
    <location>
        <position position="850"/>
    </location>
</feature>
<feature type="sequence conflict" description="In Ref. 1; AAF20064." evidence="11" ref="1">
    <original>A</original>
    <variation>V</variation>
    <location>
        <position position="864"/>
    </location>
</feature>
<feature type="sequence conflict" description="In Ref. 1; AAF20064." evidence="11" ref="1">
    <original>R</original>
    <variation>K</variation>
    <location>
        <position position="869"/>
    </location>
</feature>